<keyword id="KW-1015">Disulfide bond</keyword>
<keyword id="KW-0528">Neurotoxin</keyword>
<keyword id="KW-0593">Phospholipase A2 inhibitor</keyword>
<keyword id="KW-0629">Postsynaptic neurotoxin</keyword>
<keyword id="KW-0964">Secreted</keyword>
<keyword id="KW-0732">Signal</keyword>
<keyword id="KW-0800">Toxin</keyword>
<organism>
    <name type="scientific">Vipera aspis aspis</name>
    <name type="common">Aspic viper</name>
    <dbReference type="NCBI Taxonomy" id="194601"/>
    <lineage>
        <taxon>Eukaryota</taxon>
        <taxon>Metazoa</taxon>
        <taxon>Chordata</taxon>
        <taxon>Craniata</taxon>
        <taxon>Vertebrata</taxon>
        <taxon>Euteleostomi</taxon>
        <taxon>Lepidosauria</taxon>
        <taxon>Squamata</taxon>
        <taxon>Bifurcata</taxon>
        <taxon>Unidentata</taxon>
        <taxon>Episquamata</taxon>
        <taxon>Toxicofera</taxon>
        <taxon>Serpentes</taxon>
        <taxon>Colubroidea</taxon>
        <taxon>Viperidae</taxon>
        <taxon>Viperinae</taxon>
        <taxon>Vipera</taxon>
    </lineage>
</organism>
<dbReference type="EMBL" id="AJ459806">
    <property type="protein sequence ID" value="CAD30849.1"/>
    <property type="molecule type" value="mRNA"/>
</dbReference>
<dbReference type="EMBL" id="AJ580096">
    <property type="protein sequence ID" value="CAE47101.1"/>
    <property type="molecule type" value="mRNA"/>
</dbReference>
<dbReference type="EMBL" id="AJ580097">
    <property type="protein sequence ID" value="CAE47102.1"/>
    <property type="molecule type" value="mRNA"/>
</dbReference>
<dbReference type="EMBL" id="AJ580099">
    <property type="protein sequence ID" value="CAE47104.1"/>
    <property type="molecule type" value="mRNA"/>
</dbReference>
<dbReference type="EMBL" id="AJ580106">
    <property type="protein sequence ID" value="CAE47111.1"/>
    <property type="molecule type" value="mRNA"/>
</dbReference>
<dbReference type="SMR" id="Q8JFG1"/>
<dbReference type="GO" id="GO:0005576">
    <property type="term" value="C:extracellular region"/>
    <property type="evidence" value="ECO:0007669"/>
    <property type="project" value="UniProtKB-SubCell"/>
</dbReference>
<dbReference type="GO" id="GO:0005509">
    <property type="term" value="F:calcium ion binding"/>
    <property type="evidence" value="ECO:0007669"/>
    <property type="project" value="InterPro"/>
</dbReference>
<dbReference type="GO" id="GO:0047498">
    <property type="term" value="F:calcium-dependent phospholipase A2 activity"/>
    <property type="evidence" value="ECO:0007669"/>
    <property type="project" value="TreeGrafter"/>
</dbReference>
<dbReference type="GO" id="GO:0019834">
    <property type="term" value="F:phospholipase A2 inhibitor activity"/>
    <property type="evidence" value="ECO:0007669"/>
    <property type="project" value="UniProtKB-KW"/>
</dbReference>
<dbReference type="GO" id="GO:0005543">
    <property type="term" value="F:phospholipid binding"/>
    <property type="evidence" value="ECO:0007669"/>
    <property type="project" value="TreeGrafter"/>
</dbReference>
<dbReference type="GO" id="GO:0090729">
    <property type="term" value="F:toxin activity"/>
    <property type="evidence" value="ECO:0007669"/>
    <property type="project" value="UniProtKB-KW"/>
</dbReference>
<dbReference type="GO" id="GO:0050482">
    <property type="term" value="P:arachidonate secretion"/>
    <property type="evidence" value="ECO:0007669"/>
    <property type="project" value="InterPro"/>
</dbReference>
<dbReference type="GO" id="GO:0016042">
    <property type="term" value="P:lipid catabolic process"/>
    <property type="evidence" value="ECO:0007669"/>
    <property type="project" value="InterPro"/>
</dbReference>
<dbReference type="GO" id="GO:0042130">
    <property type="term" value="P:negative regulation of T cell proliferation"/>
    <property type="evidence" value="ECO:0007669"/>
    <property type="project" value="TreeGrafter"/>
</dbReference>
<dbReference type="GO" id="GO:0006644">
    <property type="term" value="P:phospholipid metabolic process"/>
    <property type="evidence" value="ECO:0007669"/>
    <property type="project" value="InterPro"/>
</dbReference>
<dbReference type="CDD" id="cd00125">
    <property type="entry name" value="PLA2c"/>
    <property type="match status" value="1"/>
</dbReference>
<dbReference type="FunFam" id="1.20.90.10:FF:000001">
    <property type="entry name" value="Basic phospholipase A2 homolog"/>
    <property type="match status" value="1"/>
</dbReference>
<dbReference type="Gene3D" id="1.20.90.10">
    <property type="entry name" value="Phospholipase A2 domain"/>
    <property type="match status" value="1"/>
</dbReference>
<dbReference type="InterPro" id="IPR001211">
    <property type="entry name" value="PLipase_A2"/>
</dbReference>
<dbReference type="InterPro" id="IPR033112">
    <property type="entry name" value="PLipase_A2_Asp_AS"/>
</dbReference>
<dbReference type="InterPro" id="IPR016090">
    <property type="entry name" value="PLipase_A2_dom"/>
</dbReference>
<dbReference type="InterPro" id="IPR036444">
    <property type="entry name" value="PLipase_A2_dom_sf"/>
</dbReference>
<dbReference type="PANTHER" id="PTHR11716">
    <property type="entry name" value="PHOSPHOLIPASE A2 FAMILY MEMBER"/>
    <property type="match status" value="1"/>
</dbReference>
<dbReference type="PANTHER" id="PTHR11716:SF9">
    <property type="entry name" value="PHOSPHOLIPASE A2, MEMBRANE ASSOCIATED"/>
    <property type="match status" value="1"/>
</dbReference>
<dbReference type="Pfam" id="PF00068">
    <property type="entry name" value="Phospholip_A2_1"/>
    <property type="match status" value="1"/>
</dbReference>
<dbReference type="PRINTS" id="PR00389">
    <property type="entry name" value="PHPHLIPASEA2"/>
</dbReference>
<dbReference type="SMART" id="SM00085">
    <property type="entry name" value="PA2c"/>
    <property type="match status" value="1"/>
</dbReference>
<dbReference type="SUPFAM" id="SSF48619">
    <property type="entry name" value="Phospholipase A2, PLA2"/>
    <property type="match status" value="1"/>
</dbReference>
<dbReference type="PROSITE" id="PS00119">
    <property type="entry name" value="PA2_ASP"/>
    <property type="match status" value="1"/>
</dbReference>
<proteinExistence type="evidence at transcript level"/>
<evidence type="ECO:0000250" key="1"/>
<evidence type="ECO:0000305" key="2"/>
<comment type="function">
    <text evidence="1">Heterodimer: postsynaptic neurotoxin.</text>
</comment>
<comment type="function">
    <text evidence="1">Monomer: the acidic chain inhibits the basic phospholipase A2 of the complex.</text>
</comment>
<comment type="subunit">
    <text>Heterodimer of a toxic basic protein having phospholipase A2 activity (B chain (AC Q8JFG0)) and a non-toxic acidic protein functioning as its inhibitor (A chain).</text>
</comment>
<comment type="subcellular location">
    <subcellularLocation>
        <location evidence="1">Secreted</location>
    </subcellularLocation>
</comment>
<comment type="tissue specificity">
    <text>Expressed by the venom gland.</text>
</comment>
<comment type="similarity">
    <text evidence="2">Belongs to the phospholipase A2 family. Group II subfamily. D49 sub-subfamily.</text>
</comment>
<reference key="1">
    <citation type="journal article" date="2002" name="FEBS Lett.">
        <title>Toxicity evolution of Vipera aspis aspis venom: identification and molecular modeling of a novel phospholipase A(2) heterodimer neurotoxin.</title>
        <authorList>
            <person name="Jan V."/>
            <person name="Maroun R.C."/>
            <person name="Robbe-Vincent A."/>
            <person name="De Haro L."/>
            <person name="Choumet V."/>
        </authorList>
    </citation>
    <scope>NUCLEOTIDE SEQUENCE [MRNA]</scope>
    <source>
        <tissue>Venom gland</tissue>
    </source>
</reference>
<reference key="2">
    <citation type="journal article" date="2007" name="Toxicon">
        <title>Phospholipase A2 diversity and polymorphism in European viper venoms: paradoxical molecular evolution in Viperinae.</title>
        <authorList>
            <person name="Jan V.M."/>
            <person name="Guillemin I."/>
            <person name="Robbe-Vincent A."/>
            <person name="Choumet V."/>
        </authorList>
    </citation>
    <scope>NUCLEOTIDE SEQUENCE [MRNA]</scope>
    <source>
        <tissue>Venom gland</tissue>
    </source>
</reference>
<name>PA2H_VIPAP</name>
<sequence length="138" mass="15411">MRTLWIVAVCLIGVEGNLFQFGDMILQKTGKEAVHSYAIYGCYCGWGGQGRAQDATDRCCFAQDCCYGRVNDCNPKMATYTYSFENGDIVCGDNDLCLRAVCECDRAAAICLGENVNTYDKNYEYYSISHCTEESEQC</sequence>
<feature type="signal peptide" evidence="1">
    <location>
        <begin position="1"/>
        <end position="16"/>
    </location>
</feature>
<feature type="chain" id="PRO_0000022969" description="Acidic phospholipase A2 inhibitor vaspin A chain">
    <location>
        <begin position="17"/>
        <end position="138"/>
    </location>
</feature>
<feature type="disulfide bond" evidence="1">
    <location>
        <begin position="42"/>
        <end position="131"/>
    </location>
</feature>
<feature type="disulfide bond" evidence="1">
    <location>
        <begin position="44"/>
        <end position="60"/>
    </location>
</feature>
<feature type="disulfide bond" evidence="1">
    <location>
        <begin position="59"/>
        <end position="111"/>
    </location>
</feature>
<feature type="disulfide bond" evidence="1">
    <location>
        <begin position="65"/>
        <end position="138"/>
    </location>
</feature>
<feature type="disulfide bond" evidence="1">
    <location>
        <begin position="66"/>
        <end position="104"/>
    </location>
</feature>
<feature type="disulfide bond" evidence="1">
    <location>
        <begin position="73"/>
        <end position="97"/>
    </location>
</feature>
<feature type="disulfide bond" evidence="1">
    <location>
        <begin position="91"/>
        <end position="102"/>
    </location>
</feature>
<protein>
    <recommendedName>
        <fullName>Acidic phospholipase A2 inhibitor vaspin A chain</fullName>
        <shortName>svPLA2 homolog</shortName>
    </recommendedName>
    <alternativeName>
        <fullName>Vaspin non-toxic component</fullName>
    </alternativeName>
</protein>
<accession>Q8JFG1</accession>
<accession>Q6A3P3</accession>